<accession>B2U2I3</accession>
<dbReference type="EMBL" id="CP001063">
    <property type="protein sequence ID" value="ACD06931.1"/>
    <property type="molecule type" value="Genomic_DNA"/>
</dbReference>
<dbReference type="RefSeq" id="WP_001196526.1">
    <property type="nucleotide sequence ID" value="NC_010658.1"/>
</dbReference>
<dbReference type="SMR" id="B2U2I3"/>
<dbReference type="STRING" id="344609.SbBS512_E1880"/>
<dbReference type="KEGG" id="sbc:SbBS512_E1880"/>
<dbReference type="HOGENOM" id="CLU_124502_1_1_6"/>
<dbReference type="UniPathway" id="UPA00266"/>
<dbReference type="Proteomes" id="UP000001030">
    <property type="component" value="Chromosome"/>
</dbReference>
<dbReference type="GO" id="GO:0005737">
    <property type="term" value="C:cytoplasm"/>
    <property type="evidence" value="ECO:0007669"/>
    <property type="project" value="UniProtKB-SubCell"/>
</dbReference>
<dbReference type="GO" id="GO:0016226">
    <property type="term" value="P:iron-sulfur cluster assembly"/>
    <property type="evidence" value="ECO:0007669"/>
    <property type="project" value="InterPro"/>
</dbReference>
<dbReference type="GO" id="GO:0006790">
    <property type="term" value="P:sulfur compound metabolic process"/>
    <property type="evidence" value="ECO:0007669"/>
    <property type="project" value="InterPro"/>
</dbReference>
<dbReference type="FunFam" id="3.90.1010.10:FF:000004">
    <property type="entry name" value="Cysteine desulfuration protein SufE"/>
    <property type="match status" value="1"/>
</dbReference>
<dbReference type="Gene3D" id="3.90.1010.10">
    <property type="match status" value="1"/>
</dbReference>
<dbReference type="HAMAP" id="MF_01832">
    <property type="entry name" value="SufE"/>
    <property type="match status" value="1"/>
</dbReference>
<dbReference type="InterPro" id="IPR023939">
    <property type="entry name" value="Cysteine_desulfuration_SufE"/>
</dbReference>
<dbReference type="InterPro" id="IPR003808">
    <property type="entry name" value="Fe-S_metab-assoc_dom"/>
</dbReference>
<dbReference type="NCBIfam" id="NF006792">
    <property type="entry name" value="PRK09296.1"/>
    <property type="match status" value="1"/>
</dbReference>
<dbReference type="PANTHER" id="PTHR43597:SF3">
    <property type="entry name" value="CYSTEINE DESULFURATION PROTEIN SUFE"/>
    <property type="match status" value="1"/>
</dbReference>
<dbReference type="PANTHER" id="PTHR43597">
    <property type="entry name" value="SULFUR ACCEPTOR PROTEIN CSDE"/>
    <property type="match status" value="1"/>
</dbReference>
<dbReference type="Pfam" id="PF02657">
    <property type="entry name" value="SufE"/>
    <property type="match status" value="1"/>
</dbReference>
<dbReference type="SUPFAM" id="SSF82649">
    <property type="entry name" value="SufE/NifU"/>
    <property type="match status" value="1"/>
</dbReference>
<gene>
    <name evidence="1" type="primary">sufE</name>
    <name type="ordered locus">SbBS512_E1880</name>
</gene>
<evidence type="ECO:0000255" key="1">
    <source>
        <dbReference type="HAMAP-Rule" id="MF_01832"/>
    </source>
</evidence>
<keyword id="KW-0963">Cytoplasm</keyword>
<keyword id="KW-1185">Reference proteome</keyword>
<organism>
    <name type="scientific">Shigella boydii serotype 18 (strain CDC 3083-94 / BS512)</name>
    <dbReference type="NCBI Taxonomy" id="344609"/>
    <lineage>
        <taxon>Bacteria</taxon>
        <taxon>Pseudomonadati</taxon>
        <taxon>Pseudomonadota</taxon>
        <taxon>Gammaproteobacteria</taxon>
        <taxon>Enterobacterales</taxon>
        <taxon>Enterobacteriaceae</taxon>
        <taxon>Shigella</taxon>
    </lineage>
</organism>
<sequence>MALLPDKEKLLRNFLRCANWEEKYLYIIELGQRLPELRDEDRSPQNSIQGCQNQVWIVMRQNAQGIIELQGDSDAAIVKGLIAVVFILYDQMTPQDIVNFDVRPWFEKMALTQHLTPSRSQGLEAMIRAIRAKAAALS</sequence>
<comment type="function">
    <text evidence="1">Participates in cysteine desulfuration mediated by SufS. Cysteine desulfuration mobilizes sulfur from L-cysteine to yield L-alanine and constitutes an essential step in sulfur metabolism for biosynthesis of a variety of sulfur-containing biomolecules. Functions as a sulfur acceptor for SufS, by mediating the direct transfer of the sulfur atom from the S-sulfanylcysteine of SufS, an intermediate product of cysteine desulfuration process.</text>
</comment>
<comment type="pathway">
    <text evidence="1">Cofactor biosynthesis; iron-sulfur cluster biosynthesis.</text>
</comment>
<comment type="subunit">
    <text evidence="1">Homodimer. Interacts with SufS.</text>
</comment>
<comment type="subcellular location">
    <subcellularLocation>
        <location evidence="1">Cytoplasm</location>
    </subcellularLocation>
</comment>
<comment type="similarity">
    <text evidence="1">Belongs to the SufE family.</text>
</comment>
<feature type="chain" id="PRO_1000188338" description="Cysteine desulfuration protein SufE">
    <location>
        <begin position="1"/>
        <end position="138"/>
    </location>
</feature>
<feature type="active site" description="Cysteine persulfide intermediate" evidence="1">
    <location>
        <position position="51"/>
    </location>
</feature>
<reference key="1">
    <citation type="submission" date="2008-05" db="EMBL/GenBank/DDBJ databases">
        <title>Complete sequence of Shigella boydii serotype 18 strain BS512.</title>
        <authorList>
            <person name="Rasko D.A."/>
            <person name="Rosovitz M."/>
            <person name="Maurelli A.T."/>
            <person name="Myers G."/>
            <person name="Seshadri R."/>
            <person name="Cer R."/>
            <person name="Jiang L."/>
            <person name="Ravel J."/>
            <person name="Sebastian Y."/>
        </authorList>
    </citation>
    <scope>NUCLEOTIDE SEQUENCE [LARGE SCALE GENOMIC DNA]</scope>
    <source>
        <strain>CDC 3083-94 / BS512</strain>
    </source>
</reference>
<name>SUFE_SHIB3</name>
<proteinExistence type="inferred from homology"/>
<protein>
    <recommendedName>
        <fullName evidence="1">Cysteine desulfuration protein SufE</fullName>
    </recommendedName>
</protein>